<name>RS16_WOLPM</name>
<organism>
    <name type="scientific">Wolbachia pipientis wMel</name>
    <dbReference type="NCBI Taxonomy" id="163164"/>
    <lineage>
        <taxon>Bacteria</taxon>
        <taxon>Pseudomonadati</taxon>
        <taxon>Pseudomonadota</taxon>
        <taxon>Alphaproteobacteria</taxon>
        <taxon>Rickettsiales</taxon>
        <taxon>Anaplasmataceae</taxon>
        <taxon>Wolbachieae</taxon>
        <taxon>Wolbachia</taxon>
    </lineage>
</organism>
<accession>P62240</accession>
<evidence type="ECO:0000255" key="1">
    <source>
        <dbReference type="HAMAP-Rule" id="MF_00385"/>
    </source>
</evidence>
<evidence type="ECO:0000305" key="2"/>
<dbReference type="EMBL" id="AE017196">
    <property type="protein sequence ID" value="AAS14485.1"/>
    <property type="molecule type" value="Genomic_DNA"/>
</dbReference>
<dbReference type="RefSeq" id="WP_006279266.1">
    <property type="nucleotide sequence ID" value="NZ_OX384529.1"/>
</dbReference>
<dbReference type="SMR" id="P62240"/>
<dbReference type="EnsemblBacteria" id="AAS14485">
    <property type="protein sequence ID" value="AAS14485"/>
    <property type="gene ID" value="WD_0798"/>
</dbReference>
<dbReference type="GeneID" id="70036277"/>
<dbReference type="KEGG" id="wol:WD_0798"/>
<dbReference type="eggNOG" id="COG0228">
    <property type="taxonomic scope" value="Bacteria"/>
</dbReference>
<dbReference type="Proteomes" id="UP000008215">
    <property type="component" value="Chromosome"/>
</dbReference>
<dbReference type="GO" id="GO:0005737">
    <property type="term" value="C:cytoplasm"/>
    <property type="evidence" value="ECO:0007669"/>
    <property type="project" value="UniProtKB-ARBA"/>
</dbReference>
<dbReference type="GO" id="GO:0015935">
    <property type="term" value="C:small ribosomal subunit"/>
    <property type="evidence" value="ECO:0007669"/>
    <property type="project" value="TreeGrafter"/>
</dbReference>
<dbReference type="GO" id="GO:0003735">
    <property type="term" value="F:structural constituent of ribosome"/>
    <property type="evidence" value="ECO:0007669"/>
    <property type="project" value="InterPro"/>
</dbReference>
<dbReference type="GO" id="GO:0006412">
    <property type="term" value="P:translation"/>
    <property type="evidence" value="ECO:0007669"/>
    <property type="project" value="UniProtKB-UniRule"/>
</dbReference>
<dbReference type="Gene3D" id="3.30.1320.10">
    <property type="match status" value="1"/>
</dbReference>
<dbReference type="HAMAP" id="MF_00385">
    <property type="entry name" value="Ribosomal_bS16"/>
    <property type="match status" value="1"/>
</dbReference>
<dbReference type="InterPro" id="IPR000307">
    <property type="entry name" value="Ribosomal_bS16"/>
</dbReference>
<dbReference type="InterPro" id="IPR020592">
    <property type="entry name" value="Ribosomal_bS16_CS"/>
</dbReference>
<dbReference type="InterPro" id="IPR023803">
    <property type="entry name" value="Ribosomal_bS16_dom_sf"/>
</dbReference>
<dbReference type="NCBIfam" id="TIGR00002">
    <property type="entry name" value="S16"/>
    <property type="match status" value="1"/>
</dbReference>
<dbReference type="PANTHER" id="PTHR12919">
    <property type="entry name" value="30S RIBOSOMAL PROTEIN S16"/>
    <property type="match status" value="1"/>
</dbReference>
<dbReference type="PANTHER" id="PTHR12919:SF20">
    <property type="entry name" value="SMALL RIBOSOMAL SUBUNIT PROTEIN BS16M"/>
    <property type="match status" value="1"/>
</dbReference>
<dbReference type="Pfam" id="PF00886">
    <property type="entry name" value="Ribosomal_S16"/>
    <property type="match status" value="1"/>
</dbReference>
<dbReference type="SUPFAM" id="SSF54565">
    <property type="entry name" value="Ribosomal protein S16"/>
    <property type="match status" value="1"/>
</dbReference>
<dbReference type="PROSITE" id="PS00732">
    <property type="entry name" value="RIBOSOMAL_S16"/>
    <property type="match status" value="1"/>
</dbReference>
<reference key="1">
    <citation type="journal article" date="2004" name="PLoS Biol.">
        <title>Phylogenomics of the reproductive parasite Wolbachia pipientis wMel: a streamlined genome overrun by mobile genetic elements.</title>
        <authorList>
            <person name="Wu M."/>
            <person name="Sun L.V."/>
            <person name="Vamathevan J.J."/>
            <person name="Riegler M."/>
            <person name="DeBoy R.T."/>
            <person name="Brownlie J.C."/>
            <person name="McGraw E.A."/>
            <person name="Martin W."/>
            <person name="Esser C."/>
            <person name="Ahmadinejad N."/>
            <person name="Wiegand C."/>
            <person name="Madupu R."/>
            <person name="Beanan M.J."/>
            <person name="Brinkac L.M."/>
            <person name="Daugherty S.C."/>
            <person name="Durkin A.S."/>
            <person name="Kolonay J.F."/>
            <person name="Nelson W.C."/>
            <person name="Mohamoud Y."/>
            <person name="Lee P."/>
            <person name="Berry K.J."/>
            <person name="Young M.B."/>
            <person name="Utterback T.R."/>
            <person name="Weidman J.F."/>
            <person name="Nierman W.C."/>
            <person name="Paulsen I.T."/>
            <person name="Nelson K.E."/>
            <person name="Tettelin H."/>
            <person name="O'Neill S.L."/>
            <person name="Eisen J.A."/>
        </authorList>
    </citation>
    <scope>NUCLEOTIDE SEQUENCE [LARGE SCALE GENOMIC DNA]</scope>
</reference>
<feature type="chain" id="PRO_0000167283" description="Small ribosomal subunit protein bS16">
    <location>
        <begin position="1"/>
        <end position="106"/>
    </location>
</feature>
<keyword id="KW-0687">Ribonucleoprotein</keyword>
<keyword id="KW-0689">Ribosomal protein</keyword>
<gene>
    <name evidence="1" type="primary">rpsP</name>
    <name type="ordered locus">WD_0798</name>
</gene>
<protein>
    <recommendedName>
        <fullName evidence="1">Small ribosomal subunit protein bS16</fullName>
    </recommendedName>
    <alternativeName>
        <fullName evidence="2">30S ribosomal protein S16</fullName>
    </alternativeName>
</protein>
<proteinExistence type="inferred from homology"/>
<sequence length="106" mass="12247">MAVKIRLARFGAKKRPFYRIVVADSRAPRDGRFIEKIGQYDPMLPKDNKNRVVVKADRLKHWLSVGAQATERVLWFIKKGIVTLETEPKKTEKKKVENEKAQGQEA</sequence>
<comment type="similarity">
    <text evidence="1">Belongs to the bacterial ribosomal protein bS16 family.</text>
</comment>